<dbReference type="EMBL" id="AY509253">
    <property type="protein sequence ID" value="AAS00946.1"/>
    <property type="molecule type" value="Genomic_DNA"/>
</dbReference>
<dbReference type="RefSeq" id="YP_024599.1">
    <property type="nucleotide sequence ID" value="NC_005881.2"/>
</dbReference>
<dbReference type="KEGG" id="vg:2948170"/>
<dbReference type="Proteomes" id="UP000007021">
    <property type="component" value="Segment"/>
</dbReference>
<organism>
    <name type="scientific">Ostreid herpesvirus 1 (isolate France)</name>
    <name type="common">OsHV-1</name>
    <name type="synonym">Pacific oyster herpesvirus</name>
    <dbReference type="NCBI Taxonomy" id="654903"/>
    <lineage>
        <taxon>Viruses</taxon>
        <taxon>Duplodnaviria</taxon>
        <taxon>Heunggongvirae</taxon>
        <taxon>Peploviricota</taxon>
        <taxon>Herviviricetes</taxon>
        <taxon>Herpesvirales</taxon>
        <taxon>Malacoherpesviridae</taxon>
        <taxon>Ostreavirus</taxon>
        <taxon>Ostreavirus ostreidmalaco1</taxon>
        <taxon>Ostreid herpesvirus 1</taxon>
    </lineage>
</organism>
<feature type="chain" id="PRO_0000385082" description="Uncharacterized protein ORF56">
    <location>
        <begin position="1"/>
        <end position="282"/>
    </location>
</feature>
<feature type="region of interest" description="Disordered" evidence="1">
    <location>
        <begin position="1"/>
        <end position="45"/>
    </location>
</feature>
<feature type="region of interest" description="Disordered" evidence="1">
    <location>
        <begin position="201"/>
        <end position="259"/>
    </location>
</feature>
<feature type="compositionally biased region" description="Basic and acidic residues" evidence="1">
    <location>
        <begin position="10"/>
        <end position="19"/>
    </location>
</feature>
<feature type="compositionally biased region" description="Polar residues" evidence="1">
    <location>
        <begin position="26"/>
        <end position="38"/>
    </location>
</feature>
<feature type="compositionally biased region" description="Basic and acidic residues" evidence="1">
    <location>
        <begin position="201"/>
        <end position="237"/>
    </location>
</feature>
<name>Y056_OSHVF</name>
<organismHost>
    <name type="scientific">Magallana gigas</name>
    <name type="common">Pacific oyster</name>
    <name type="synonym">Crassostrea gigas</name>
    <dbReference type="NCBI Taxonomy" id="29159"/>
</organismHost>
<organismHost>
    <name type="scientific">Pecten maximus</name>
    <name type="common">King scallop</name>
    <name type="synonym">Pilgrim's clam</name>
    <dbReference type="NCBI Taxonomy" id="6579"/>
</organismHost>
<gene>
    <name type="ORF">ORF56</name>
</gene>
<proteinExistence type="predicted"/>
<reference key="1">
    <citation type="journal article" date="2005" name="J. Gen. Virol.">
        <title>A novel class of herpesvirus with bivalve hosts.</title>
        <authorList>
            <person name="Davison A.J."/>
            <person name="Trus B.L."/>
            <person name="Cheng N."/>
            <person name="Steven A.C."/>
            <person name="Watson M.S."/>
            <person name="Cunningham C."/>
            <person name="Le Deuff R.M."/>
            <person name="Renault T."/>
        </authorList>
    </citation>
    <scope>NUCLEOTIDE SEQUENCE [LARGE SCALE GENOMIC DNA]</scope>
</reference>
<accession>Q6R7G9</accession>
<protein>
    <recommendedName>
        <fullName>Uncharacterized protein ORF56</fullName>
    </recommendedName>
</protein>
<sequence>MPLEIEVSESEMKEFKESTIDDDLESVSSEETLTQSMVDVSEEDEGLYNDITVEEKPSGDGCEEIESDEGEFDYIPIFNERTIKEMLLPYSSWTEYLTNSRAILPSITFDDKSDYDLDMRGWRQFPLAPILAEKCSGIYFFLQTLSGKKLLVDGPTWVPVSWLVCTFANVIEEADTRDISVVSNEKLQRLWDERIIGPDNDRRRKEDSKARSRLTRREEHSEHHRSGKSRRERERRSSAVQEINRRHHKRYDSDDKPWGLKREDAIYQHRAGSSHGRRHHPY</sequence>
<evidence type="ECO:0000256" key="1">
    <source>
        <dbReference type="SAM" id="MobiDB-lite"/>
    </source>
</evidence>
<keyword id="KW-1185">Reference proteome</keyword>